<organism>
    <name type="scientific">Bordetella parapertussis (strain 12822 / ATCC BAA-587 / NCTC 13253)</name>
    <dbReference type="NCBI Taxonomy" id="257311"/>
    <lineage>
        <taxon>Bacteria</taxon>
        <taxon>Pseudomonadati</taxon>
        <taxon>Pseudomonadota</taxon>
        <taxon>Betaproteobacteria</taxon>
        <taxon>Burkholderiales</taxon>
        <taxon>Alcaligenaceae</taxon>
        <taxon>Bordetella</taxon>
    </lineage>
</organism>
<sequence>MANTAQARKRARQSVQRNKHNSSLRSMLRTAIKRVRQSIATGDKAAAGETLRKATSVIDSVADKNIIHKNKAARHKSRLAAAVKALA</sequence>
<evidence type="ECO:0000255" key="1">
    <source>
        <dbReference type="HAMAP-Rule" id="MF_00500"/>
    </source>
</evidence>
<evidence type="ECO:0000256" key="2">
    <source>
        <dbReference type="SAM" id="MobiDB-lite"/>
    </source>
</evidence>
<evidence type="ECO:0000305" key="3"/>
<accession>Q7W7G3</accession>
<reference key="1">
    <citation type="journal article" date="2003" name="Nat. Genet.">
        <title>Comparative analysis of the genome sequences of Bordetella pertussis, Bordetella parapertussis and Bordetella bronchiseptica.</title>
        <authorList>
            <person name="Parkhill J."/>
            <person name="Sebaihia M."/>
            <person name="Preston A."/>
            <person name="Murphy L.D."/>
            <person name="Thomson N.R."/>
            <person name="Harris D.E."/>
            <person name="Holden M.T.G."/>
            <person name="Churcher C.M."/>
            <person name="Bentley S.D."/>
            <person name="Mungall K.L."/>
            <person name="Cerdeno-Tarraga A.-M."/>
            <person name="Temple L."/>
            <person name="James K.D."/>
            <person name="Harris B."/>
            <person name="Quail M.A."/>
            <person name="Achtman M."/>
            <person name="Atkin R."/>
            <person name="Baker S."/>
            <person name="Basham D."/>
            <person name="Bason N."/>
            <person name="Cherevach I."/>
            <person name="Chillingworth T."/>
            <person name="Collins M."/>
            <person name="Cronin A."/>
            <person name="Davis P."/>
            <person name="Doggett J."/>
            <person name="Feltwell T."/>
            <person name="Goble A."/>
            <person name="Hamlin N."/>
            <person name="Hauser H."/>
            <person name="Holroyd S."/>
            <person name="Jagels K."/>
            <person name="Leather S."/>
            <person name="Moule S."/>
            <person name="Norberczak H."/>
            <person name="O'Neil S."/>
            <person name="Ormond D."/>
            <person name="Price C."/>
            <person name="Rabbinowitsch E."/>
            <person name="Rutter S."/>
            <person name="Sanders M."/>
            <person name="Saunders D."/>
            <person name="Seeger K."/>
            <person name="Sharp S."/>
            <person name="Simmonds M."/>
            <person name="Skelton J."/>
            <person name="Squares R."/>
            <person name="Squares S."/>
            <person name="Stevens K."/>
            <person name="Unwin L."/>
            <person name="Whitehead S."/>
            <person name="Barrell B.G."/>
            <person name="Maskell D.J."/>
        </authorList>
    </citation>
    <scope>NUCLEOTIDE SEQUENCE [LARGE SCALE GENOMIC DNA]</scope>
    <source>
        <strain>12822 / ATCC BAA-587 / NCTC 13253</strain>
    </source>
</reference>
<dbReference type="EMBL" id="BX640430">
    <property type="protein sequence ID" value="CAE37850.1"/>
    <property type="molecule type" value="Genomic_DNA"/>
</dbReference>
<dbReference type="RefSeq" id="WP_003812908.1">
    <property type="nucleotide sequence ID" value="NC_002928.3"/>
</dbReference>
<dbReference type="SMR" id="Q7W7G3"/>
<dbReference type="GeneID" id="93204343"/>
<dbReference type="KEGG" id="bpa:BPP2556"/>
<dbReference type="HOGENOM" id="CLU_160655_4_0_4"/>
<dbReference type="Proteomes" id="UP000001421">
    <property type="component" value="Chromosome"/>
</dbReference>
<dbReference type="GO" id="GO:0005829">
    <property type="term" value="C:cytosol"/>
    <property type="evidence" value="ECO:0007669"/>
    <property type="project" value="TreeGrafter"/>
</dbReference>
<dbReference type="GO" id="GO:0015935">
    <property type="term" value="C:small ribosomal subunit"/>
    <property type="evidence" value="ECO:0007669"/>
    <property type="project" value="TreeGrafter"/>
</dbReference>
<dbReference type="GO" id="GO:0070181">
    <property type="term" value="F:small ribosomal subunit rRNA binding"/>
    <property type="evidence" value="ECO:0007669"/>
    <property type="project" value="TreeGrafter"/>
</dbReference>
<dbReference type="GO" id="GO:0003735">
    <property type="term" value="F:structural constituent of ribosome"/>
    <property type="evidence" value="ECO:0007669"/>
    <property type="project" value="InterPro"/>
</dbReference>
<dbReference type="GO" id="GO:0006412">
    <property type="term" value="P:translation"/>
    <property type="evidence" value="ECO:0007669"/>
    <property type="project" value="UniProtKB-UniRule"/>
</dbReference>
<dbReference type="FunFam" id="1.20.58.110:FF:000001">
    <property type="entry name" value="30S ribosomal protein S20"/>
    <property type="match status" value="1"/>
</dbReference>
<dbReference type="Gene3D" id="1.20.58.110">
    <property type="entry name" value="Ribosomal protein S20"/>
    <property type="match status" value="1"/>
</dbReference>
<dbReference type="HAMAP" id="MF_00500">
    <property type="entry name" value="Ribosomal_bS20"/>
    <property type="match status" value="1"/>
</dbReference>
<dbReference type="InterPro" id="IPR002583">
    <property type="entry name" value="Ribosomal_bS20"/>
</dbReference>
<dbReference type="InterPro" id="IPR036510">
    <property type="entry name" value="Ribosomal_bS20_sf"/>
</dbReference>
<dbReference type="NCBIfam" id="TIGR00029">
    <property type="entry name" value="S20"/>
    <property type="match status" value="1"/>
</dbReference>
<dbReference type="PANTHER" id="PTHR33398">
    <property type="entry name" value="30S RIBOSOMAL PROTEIN S20"/>
    <property type="match status" value="1"/>
</dbReference>
<dbReference type="PANTHER" id="PTHR33398:SF1">
    <property type="entry name" value="SMALL RIBOSOMAL SUBUNIT PROTEIN BS20C"/>
    <property type="match status" value="1"/>
</dbReference>
<dbReference type="Pfam" id="PF01649">
    <property type="entry name" value="Ribosomal_S20p"/>
    <property type="match status" value="1"/>
</dbReference>
<dbReference type="SUPFAM" id="SSF46992">
    <property type="entry name" value="Ribosomal protein S20"/>
    <property type="match status" value="1"/>
</dbReference>
<comment type="function">
    <text evidence="1">Binds directly to 16S ribosomal RNA.</text>
</comment>
<comment type="similarity">
    <text evidence="1">Belongs to the bacterial ribosomal protein bS20 family.</text>
</comment>
<proteinExistence type="inferred from homology"/>
<protein>
    <recommendedName>
        <fullName evidence="1">Small ribosomal subunit protein bS20</fullName>
    </recommendedName>
    <alternativeName>
        <fullName evidence="3">30S ribosomal protein S20</fullName>
    </alternativeName>
</protein>
<name>RS20_BORPA</name>
<feature type="chain" id="PRO_0000167929" description="Small ribosomal subunit protein bS20">
    <location>
        <begin position="1"/>
        <end position="87"/>
    </location>
</feature>
<feature type="region of interest" description="Disordered" evidence="2">
    <location>
        <begin position="1"/>
        <end position="25"/>
    </location>
</feature>
<feature type="compositionally biased region" description="Basic residues" evidence="2">
    <location>
        <begin position="7"/>
        <end position="22"/>
    </location>
</feature>
<keyword id="KW-0687">Ribonucleoprotein</keyword>
<keyword id="KW-0689">Ribosomal protein</keyword>
<keyword id="KW-0694">RNA-binding</keyword>
<keyword id="KW-0699">rRNA-binding</keyword>
<gene>
    <name evidence="1" type="primary">rpsT</name>
    <name type="ordered locus">BPP2556</name>
</gene>